<protein>
    <recommendedName>
        <fullName>GDNF family receptor alpha-2</fullName>
        <shortName>GDNF receptor alpha-2</shortName>
        <shortName>GDNFR-alpha-2</shortName>
        <shortName>GFR-alpha-2</shortName>
    </recommendedName>
</protein>
<evidence type="ECO:0000250" key="1">
    <source>
        <dbReference type="UniProtKB" id="O00451"/>
    </source>
</evidence>
<evidence type="ECO:0000250" key="2">
    <source>
        <dbReference type="UniProtKB" id="O08842"/>
    </source>
</evidence>
<evidence type="ECO:0000255" key="3"/>
<evidence type="ECO:0000305" key="4"/>
<proteinExistence type="evidence at transcript level"/>
<keyword id="KW-1003">Cell membrane</keyword>
<keyword id="KW-1015">Disulfide bond</keyword>
<keyword id="KW-0325">Glycoprotein</keyword>
<keyword id="KW-0336">GPI-anchor</keyword>
<keyword id="KW-0449">Lipoprotein</keyword>
<keyword id="KW-0472">Membrane</keyword>
<keyword id="KW-0675">Receptor</keyword>
<keyword id="KW-1185">Reference proteome</keyword>
<keyword id="KW-0732">Signal</keyword>
<accession>Q5RAD6</accession>
<accession>Q5R9T3</accession>
<comment type="function">
    <text evidence="1">Receptor for neurturin (NRTN), a growth factor that supports the survival of sympathetic neurons. NRTN-binding leads to autophosphorylation and activation of the RET receptor. Also able to mediate GDNF signaling through the RET tyrosine kinase receptor.</text>
</comment>
<comment type="subunit">
    <text evidence="1">Interacts with NRTN ligand and RET: forms a 2:2:2 ternary complex composed of NRTN ligand, GFRA2 and RET receptor. Also forms a 4:4:4 tetrameric complex composed of 4 copies of NRTN ligand, GFRA2 and RET receptor, which prevents endocytosis of RET. Interacts with SORL1.</text>
</comment>
<comment type="subcellular location">
    <subcellularLocation>
        <location evidence="2">Cell membrane</location>
        <topology evidence="2">Lipid-anchor</topology>
        <topology evidence="2">GPI-anchor</topology>
    </subcellularLocation>
</comment>
<comment type="similarity">
    <text evidence="4">Belongs to the GDNFR family.</text>
</comment>
<reference key="1">
    <citation type="submission" date="2004-11" db="EMBL/GenBank/DDBJ databases">
        <authorList>
            <consortium name="The German cDNA consortium"/>
        </authorList>
    </citation>
    <scope>NUCLEOTIDE SEQUENCE [LARGE SCALE MRNA]</scope>
    <source>
        <tissue>Brain cortex</tissue>
        <tissue>Heart</tissue>
    </source>
</reference>
<organism>
    <name type="scientific">Pongo abelii</name>
    <name type="common">Sumatran orangutan</name>
    <name type="synonym">Pongo pygmaeus abelii</name>
    <dbReference type="NCBI Taxonomy" id="9601"/>
    <lineage>
        <taxon>Eukaryota</taxon>
        <taxon>Metazoa</taxon>
        <taxon>Chordata</taxon>
        <taxon>Craniata</taxon>
        <taxon>Vertebrata</taxon>
        <taxon>Euteleostomi</taxon>
        <taxon>Mammalia</taxon>
        <taxon>Eutheria</taxon>
        <taxon>Euarchontoglires</taxon>
        <taxon>Primates</taxon>
        <taxon>Haplorrhini</taxon>
        <taxon>Catarrhini</taxon>
        <taxon>Hominidae</taxon>
        <taxon>Pongo</taxon>
    </lineage>
</organism>
<feature type="signal peptide" evidence="3">
    <location>
        <begin position="1"/>
        <end position="21"/>
    </location>
</feature>
<feature type="chain" id="PRO_0000259971" description="GDNF family receptor alpha-2">
    <location>
        <begin position="22"/>
        <end position="444"/>
    </location>
</feature>
<feature type="propeptide" id="PRO_0000259972" description="Removed in mature form" evidence="3">
    <location>
        <begin position="445"/>
        <end position="464"/>
    </location>
</feature>
<feature type="lipid moiety-binding region" description="GPI-anchor amidated serine" evidence="3">
    <location>
        <position position="444"/>
    </location>
</feature>
<feature type="glycosylation site" description="N-linked (GlcNAc...) asparagine" evidence="3">
    <location>
        <position position="52"/>
    </location>
</feature>
<feature type="glycosylation site" description="N-linked (GlcNAc...) asparagine" evidence="3">
    <location>
        <position position="357"/>
    </location>
</feature>
<feature type="glycosylation site" description="N-linked (GlcNAc...) asparagine" evidence="3">
    <location>
        <position position="413"/>
    </location>
</feature>
<feature type="disulfide bond" evidence="1">
    <location>
        <begin position="40"/>
        <end position="93"/>
    </location>
</feature>
<feature type="disulfide bond" evidence="1">
    <location>
        <begin position="47"/>
        <end position="53"/>
    </location>
</feature>
<feature type="disulfide bond" evidence="1">
    <location>
        <begin position="63"/>
        <end position="78"/>
    </location>
</feature>
<feature type="disulfide bond" evidence="1">
    <location>
        <begin position="95"/>
        <end position="105"/>
    </location>
</feature>
<feature type="disulfide bond" evidence="1">
    <location>
        <begin position="161"/>
        <end position="222"/>
    </location>
</feature>
<feature type="disulfide bond" evidence="1">
    <location>
        <begin position="168"/>
        <end position="174"/>
    </location>
</feature>
<feature type="disulfide bond" evidence="1">
    <location>
        <begin position="185"/>
        <end position="200"/>
    </location>
</feature>
<feature type="disulfide bond" evidence="1">
    <location>
        <begin position="195"/>
        <end position="241"/>
    </location>
</feature>
<feature type="disulfide bond" evidence="1">
    <location>
        <begin position="224"/>
        <end position="229"/>
    </location>
</feature>
<feature type="disulfide bond" evidence="1">
    <location>
        <begin position="251"/>
        <end position="323"/>
    </location>
</feature>
<feature type="disulfide bond" evidence="1">
    <location>
        <begin position="258"/>
        <end position="264"/>
    </location>
</feature>
<feature type="disulfide bond" evidence="1">
    <location>
        <begin position="275"/>
        <end position="293"/>
    </location>
</feature>
<feature type="disulfide bond" evidence="1">
    <location>
        <begin position="285"/>
        <end position="347"/>
    </location>
</feature>
<feature type="disulfide bond" evidence="1">
    <location>
        <begin position="325"/>
        <end position="335"/>
    </location>
</feature>
<feature type="sequence conflict" description="In Ref. 1; CAH91274." evidence="4" ref="1">
    <original>H</original>
    <variation>R</variation>
    <location>
        <position position="262"/>
    </location>
</feature>
<feature type="sequence conflict" description="In Ref. 1; CAH91477." evidence="4" ref="1">
    <original>C</original>
    <variation>Y</variation>
    <location>
        <position position="293"/>
    </location>
</feature>
<gene>
    <name type="primary">GFRA2</name>
</gene>
<dbReference type="EMBL" id="CR859081">
    <property type="protein sequence ID" value="CAH91274.1"/>
    <property type="molecule type" value="mRNA"/>
</dbReference>
<dbReference type="EMBL" id="CR859299">
    <property type="protein sequence ID" value="CAH91477.1"/>
    <property type="molecule type" value="mRNA"/>
</dbReference>
<dbReference type="RefSeq" id="NP_001128806.2">
    <property type="nucleotide sequence ID" value="NM_001135334.2"/>
</dbReference>
<dbReference type="RefSeq" id="NP_001417473.1">
    <property type="nucleotide sequence ID" value="NM_001430544.1"/>
</dbReference>
<dbReference type="SMR" id="Q5RAD6"/>
<dbReference type="FunCoup" id="Q5RAD6">
    <property type="interactions" value="49"/>
</dbReference>
<dbReference type="STRING" id="9601.ENSPPYP00000020622"/>
<dbReference type="GlyCosmos" id="Q5RAD6">
    <property type="glycosylation" value="3 sites, No reported glycans"/>
</dbReference>
<dbReference type="Ensembl" id="ENSPPYT00000021451.3">
    <property type="protein sequence ID" value="ENSPPYP00000020622.3"/>
    <property type="gene ID" value="ENSPPYG00000018405.3"/>
</dbReference>
<dbReference type="GeneID" id="100171804"/>
<dbReference type="CTD" id="2675"/>
<dbReference type="eggNOG" id="ENOG502QS3P">
    <property type="taxonomic scope" value="Eukaryota"/>
</dbReference>
<dbReference type="GeneTree" id="ENSGT00940000156168"/>
<dbReference type="HOGENOM" id="CLU_040179_1_1_1"/>
<dbReference type="InParanoid" id="Q5RAD6"/>
<dbReference type="OMA" id="LCYSEAQ"/>
<dbReference type="Proteomes" id="UP000001595">
    <property type="component" value="Chromosome 8"/>
</dbReference>
<dbReference type="GO" id="GO:0009897">
    <property type="term" value="C:external side of plasma membrane"/>
    <property type="evidence" value="ECO:0007669"/>
    <property type="project" value="TreeGrafter"/>
</dbReference>
<dbReference type="GO" id="GO:0043235">
    <property type="term" value="C:receptor complex"/>
    <property type="evidence" value="ECO:0007669"/>
    <property type="project" value="TreeGrafter"/>
</dbReference>
<dbReference type="GO" id="GO:0016167">
    <property type="term" value="F:glial cell-derived neurotrophic factor receptor activity"/>
    <property type="evidence" value="ECO:0000250"/>
    <property type="project" value="UniProtKB"/>
</dbReference>
<dbReference type="GO" id="GO:1904399">
    <property type="term" value="F:heparan sulfate binding"/>
    <property type="evidence" value="ECO:0000250"/>
    <property type="project" value="UniProtKB"/>
</dbReference>
<dbReference type="GO" id="GO:0035860">
    <property type="term" value="P:glial cell-derived neurotrophic factor receptor signaling pathway"/>
    <property type="evidence" value="ECO:0000250"/>
    <property type="project" value="UniProtKB"/>
</dbReference>
<dbReference type="GO" id="GO:0007399">
    <property type="term" value="P:nervous system development"/>
    <property type="evidence" value="ECO:0007669"/>
    <property type="project" value="TreeGrafter"/>
</dbReference>
<dbReference type="FunFam" id="1.10.220.110:FF:000001">
    <property type="entry name" value="GDNF family receptor alpha"/>
    <property type="match status" value="1"/>
</dbReference>
<dbReference type="Gene3D" id="1.10.220.110">
    <property type="entry name" value="GDNF binding domain"/>
    <property type="match status" value="1"/>
</dbReference>
<dbReference type="InterPro" id="IPR016017">
    <property type="entry name" value="GDNF/GAS1"/>
</dbReference>
<dbReference type="InterPro" id="IPR037193">
    <property type="entry name" value="GDNF_alpha"/>
</dbReference>
<dbReference type="InterPro" id="IPR003438">
    <property type="entry name" value="GDNF_rcpt"/>
</dbReference>
<dbReference type="InterPro" id="IPR003504">
    <property type="entry name" value="GDNF_rcpt_a2"/>
</dbReference>
<dbReference type="InterPro" id="IPR017372">
    <property type="entry name" value="Glial_neurotroph_fac_rcpt_a1/2"/>
</dbReference>
<dbReference type="PANTHER" id="PTHR10269:SF4">
    <property type="entry name" value="GDNF FAMILY RECEPTOR ALPHA-2"/>
    <property type="match status" value="1"/>
</dbReference>
<dbReference type="PANTHER" id="PTHR10269">
    <property type="entry name" value="GDNF RECEPTOR ALPHA"/>
    <property type="match status" value="1"/>
</dbReference>
<dbReference type="Pfam" id="PF02351">
    <property type="entry name" value="GDNF"/>
    <property type="match status" value="3"/>
</dbReference>
<dbReference type="PIRSF" id="PIRSF038071">
    <property type="entry name" value="GDNF_family_receptor_alpha"/>
    <property type="match status" value="1"/>
</dbReference>
<dbReference type="PRINTS" id="PR01318">
    <property type="entry name" value="GDNFRALPHA2"/>
</dbReference>
<dbReference type="PRINTS" id="PR01316">
    <property type="entry name" value="GDNFRECEPTOR"/>
</dbReference>
<dbReference type="SMART" id="SM00907">
    <property type="entry name" value="GDNF"/>
    <property type="match status" value="3"/>
</dbReference>
<dbReference type="SUPFAM" id="SSF110035">
    <property type="entry name" value="GDNF receptor-like"/>
    <property type="match status" value="1"/>
</dbReference>
<name>GFRA2_PONAB</name>
<sequence>MILANVFCLFFFLDETLRSLASPSSLQGPELHGWRPPVDCVRANELCAAESNCSSRYRTLRQCLAGRDRNTMLANKECQAALEVLQESPLYDCRCKRGMKKELQCLQIYWSIHLGLTEGEEFYEASPYEPVTSRLSDIFRLASIFSGTGADPVVSAKSNHCLDAAKACNLNDNCKKLRSSYISICNREISPTERCNRRKCHKALRQFFDRVPSEYTYRMLFCSCQDQACAERRRQTILPSCSYEDKEKPNCLDLRGVCRTDHLCRSRLADFHANCRASYQTVTSCPADNYQACLGSYAGMIGFDMTPNYVDSSPTGIVVSPWCSCRGSGNMEEECEKFLRDFTENPCLRNAIQAFGNGTDVNVSPKGPLFQATQAPRAEKTPSLPDDLSDSTSLGTSVITTCTSVQEQGLKANNSKELSMCFTELTTNIIPGSNKVIKPNSGPSRARPSAALTVLSVLMLKLAL</sequence>